<keyword id="KW-0002">3D-structure</keyword>
<keyword id="KW-0106">Calcium</keyword>
<keyword id="KW-1003">Cell membrane</keyword>
<keyword id="KW-1015">Disulfide bond</keyword>
<keyword id="KW-0325">Glycoprotein</keyword>
<keyword id="KW-0407">Ion channel</keyword>
<keyword id="KW-0406">Ion transport</keyword>
<keyword id="KW-1071">Ligand-gated ion channel</keyword>
<keyword id="KW-0460">Magnesium</keyword>
<keyword id="KW-0472">Membrane</keyword>
<keyword id="KW-0597">Phosphoprotein</keyword>
<keyword id="KW-0628">Postsynaptic cell membrane</keyword>
<keyword id="KW-1267">Proteomics identification</keyword>
<keyword id="KW-0675">Receptor</keyword>
<keyword id="KW-1185">Reference proteome</keyword>
<keyword id="KW-0732">Signal</keyword>
<keyword id="KW-0770">Synapse</keyword>
<keyword id="KW-0812">Transmembrane</keyword>
<keyword id="KW-1133">Transmembrane helix</keyword>
<keyword id="KW-0813">Transport</keyword>
<feature type="signal peptide" evidence="7">
    <location>
        <begin position="1"/>
        <end position="19"/>
    </location>
</feature>
<feature type="chain" id="PRO_0000011580" description="Glutamate receptor ionotropic, NMDA 2C">
    <location>
        <begin position="20"/>
        <end position="1233"/>
    </location>
</feature>
<feature type="topological domain" description="Extracellular" evidence="16">
    <location>
        <begin position="20"/>
        <end position="554"/>
    </location>
</feature>
<feature type="transmembrane region" description="Helical" evidence="12 19 21">
    <location>
        <begin position="555"/>
        <end position="575"/>
    </location>
</feature>
<feature type="topological domain" description="Cytoplasmic" evidence="16">
    <location>
        <begin position="576"/>
        <end position="598"/>
    </location>
</feature>
<feature type="intramembrane region" description="Discontinuously helical" evidence="12 19 21">
    <location>
        <begin position="599"/>
        <end position="611"/>
    </location>
</feature>
<feature type="topological domain" description="Cytoplasmic" evidence="16">
    <location>
        <begin position="612"/>
        <end position="626"/>
    </location>
</feature>
<feature type="transmembrane region" description="Helical" evidence="12 19 21">
    <location>
        <begin position="627"/>
        <end position="644"/>
    </location>
</feature>
<feature type="topological domain" description="Extracellular" evidence="16">
    <location>
        <begin position="645"/>
        <end position="813"/>
    </location>
</feature>
<feature type="transmembrane region" description="Helical" evidence="12 19 21">
    <location>
        <begin position="814"/>
        <end position="836"/>
    </location>
</feature>
<feature type="topological domain" description="Cytoplasmic" evidence="4">
    <location>
        <begin position="837"/>
        <end position="1233"/>
    </location>
</feature>
<feature type="region of interest" description="Pore-forming" evidence="4">
    <location>
        <begin position="601"/>
        <end position="620"/>
    </location>
</feature>
<feature type="region of interest" description="Disordered" evidence="8">
    <location>
        <begin position="920"/>
        <end position="994"/>
    </location>
</feature>
<feature type="short sequence motif" description="PDZ-binding">
    <location>
        <begin position="1231"/>
        <end position="1233"/>
    </location>
</feature>
<feature type="compositionally biased region" description="Pro residues" evidence="8">
    <location>
        <begin position="929"/>
        <end position="956"/>
    </location>
</feature>
<feature type="compositionally biased region" description="Pro residues" evidence="8">
    <location>
        <begin position="975"/>
        <end position="987"/>
    </location>
</feature>
<feature type="binding site" evidence="5">
    <location>
        <position position="509"/>
    </location>
    <ligand>
        <name>L-glutamate</name>
        <dbReference type="ChEBI" id="CHEBI:29985"/>
    </ligand>
</feature>
<feature type="binding site" evidence="4">
    <location>
        <position position="511"/>
    </location>
    <ligand>
        <name>L-glutamate</name>
        <dbReference type="ChEBI" id="CHEBI:29985"/>
    </ligand>
</feature>
<feature type="binding site" evidence="3">
    <location>
        <position position="516"/>
    </location>
    <ligand>
        <name>L-glutamate</name>
        <dbReference type="ChEBI" id="CHEBI:29985"/>
    </ligand>
</feature>
<feature type="binding site" evidence="5">
    <location>
        <position position="687"/>
    </location>
    <ligand>
        <name>L-glutamate</name>
        <dbReference type="ChEBI" id="CHEBI:29985"/>
    </ligand>
</feature>
<feature type="binding site" evidence="5">
    <location>
        <position position="688"/>
    </location>
    <ligand>
        <name>L-glutamate</name>
        <dbReference type="ChEBI" id="CHEBI:29985"/>
    </ligand>
</feature>
<feature type="binding site" evidence="4">
    <location>
        <position position="729"/>
    </location>
    <ligand>
        <name>L-glutamate</name>
        <dbReference type="ChEBI" id="CHEBI:29985"/>
    </ligand>
</feature>
<feature type="site" description="Functional determinant of NMDA receptors" evidence="1">
    <location>
        <position position="612"/>
    </location>
</feature>
<feature type="modified residue" description="Phosphoserine" evidence="6">
    <location>
        <position position="875"/>
    </location>
</feature>
<feature type="modified residue" description="Phosphoserine" evidence="6">
    <location>
        <position position="881"/>
    </location>
</feature>
<feature type="modified residue" description="Phosphoserine" evidence="5">
    <location>
        <position position="912"/>
    </location>
</feature>
<feature type="glycosylation site" description="N-linked (GlcNAc...) asparagine" evidence="7">
    <location>
        <position position="70"/>
    </location>
</feature>
<feature type="glycosylation site" description="N-linked (GlcNAc...) asparagine" evidence="7">
    <location>
        <position position="73"/>
    </location>
</feature>
<feature type="glycosylation site" description="N-linked (GlcNAc...) asparagine" evidence="7 12 20 22">
    <location>
        <position position="337"/>
    </location>
</feature>
<feature type="glycosylation site" description="N-linked (GlcNAc...) asparagine" evidence="7">
    <location>
        <position position="438"/>
    </location>
</feature>
<feature type="glycosylation site" description="N-linked (GlcNAc...) asparagine" evidence="7">
    <location>
        <position position="539"/>
    </location>
</feature>
<feature type="glycosylation site" description="N-linked (GlcNAc...) asparagine" evidence="7 12 18">
    <location>
        <position position="685"/>
    </location>
</feature>
<feature type="disulfide bond" evidence="12 18 19 20 21 22 23">
    <location>
        <begin position="82"/>
        <end position="317"/>
    </location>
</feature>
<feature type="disulfide bond" evidence="12 18 19 20 21 22 23">
    <location>
        <begin position="426"/>
        <end position="453"/>
    </location>
</feature>
<feature type="disulfide bond" evidence="12 18 19 20 21 22 23">
    <location>
        <begin position="433"/>
        <end position="454"/>
    </location>
</feature>
<feature type="disulfide bond" evidence="12 18 19 20 21 22 23">
    <location>
        <begin position="743"/>
        <end position="798"/>
    </location>
</feature>
<feature type="sequence variant" id="VAR_079958" description="Found in a patient with autism spectrum disorder; uncertain significance." evidence="10">
    <location>
        <begin position="18"/>
        <end position="1233"/>
    </location>
</feature>
<feature type="sequence variant" id="VAR_079959" description="In dbSNP:rs192960268." evidence="10">
    <original>V</original>
    <variation>I</variation>
    <location>
        <position position="90"/>
    </location>
</feature>
<feature type="sequence variant" id="VAR_079960" description="In dbSNP:rs201199917." evidence="10">
    <original>A</original>
    <variation>V</variation>
    <location>
        <position position="166"/>
    </location>
</feature>
<feature type="sequence variant" id="VAR_079961" evidence="10">
    <original>M</original>
    <variation>T</variation>
    <location>
        <position position="573"/>
    </location>
</feature>
<feature type="sequence variant" id="VAR_079962" description="In dbSNP:rs746610735." evidence="10">
    <original>A</original>
    <variation>T</variation>
    <location>
        <position position="641"/>
    </location>
</feature>
<feature type="sequence variant" id="VAR_079963" description="Found in a patient with schizophrenia; uncertain significance; dbSNP:rs1381530257." evidence="10">
    <original>R</original>
    <variation>C</variation>
    <location>
        <position position="679"/>
    </location>
</feature>
<feature type="sequence variant" id="VAR_079964" description="Found in a patient with autism spectrum disorder; uncertain significance; dbSNP:rs1308468356." evidence="10">
    <original>I</original>
    <variation>T</variation>
    <location>
        <position position="863"/>
    </location>
</feature>
<feature type="sequence variant" id="VAR_079965" description="In dbSNP:rs765016248." evidence="10">
    <original>Q</original>
    <variation>R</variation>
    <location>
        <position position="871"/>
    </location>
</feature>
<feature type="sequence variant" id="VAR_079966" description="In dbSNP:rs139011774." evidence="10">
    <original>P</original>
    <variation>S</variation>
    <location>
        <position position="877"/>
    </location>
</feature>
<feature type="sequence variant" id="VAR_079967" description="In dbSNP:rs370546831." evidence="10">
    <original>S</original>
    <variation>I</variation>
    <location>
        <position position="911"/>
    </location>
</feature>
<feature type="sequence variant" id="VAR_079968" description="In dbSNP:rs960726960." evidence="10">
    <original>P</original>
    <variation>A</variation>
    <location>
        <position position="982"/>
    </location>
</feature>
<feature type="sequence variant" id="VAR_079969" description="Found in a patient with schizophrenia; uncertain significance; dbSNP:rs552196496." evidence="10">
    <original>S</original>
    <variation>P</variation>
    <location>
        <position position="989"/>
    </location>
</feature>
<feature type="sequence variant" id="VAR_079970" description="Found in a patient with schizophrenia; uncertain significance." evidence="10">
    <original>S</original>
    <variation>L</variation>
    <location>
        <position position="995"/>
    </location>
</feature>
<feature type="sequence variant" id="VAR_079971" description="In dbSNP:rs889196426." evidence="10">
    <original>H</original>
    <variation>Y</variation>
    <location>
        <position position="1079"/>
    </location>
</feature>
<feature type="sequence variant" id="VAR_079972" description="In dbSNP:rs751640851." evidence="10">
    <original>P</original>
    <variation>A</variation>
    <location>
        <position position="1141"/>
    </location>
</feature>
<feature type="sequence variant" id="VAR_079973" description="In dbSNP:rs115230539." evidence="10">
    <original>G</original>
    <variation>R</variation>
    <location>
        <position position="1180"/>
    </location>
</feature>
<feature type="sequence variant" id="VAR_079974" description="In dbSNP:rs143282101." evidence="10">
    <original>T</original>
    <variation>I</variation>
    <location>
        <position position="1196"/>
    </location>
</feature>
<feature type="sequence variant" id="VAR_037634" description="In dbSNP:rs3744215.">
    <original>R</original>
    <variation>S</variation>
    <location>
        <position position="1209"/>
    </location>
</feature>
<feature type="sequence conflict" description="In Ref. 3; AAI40802." evidence="15" ref="3">
    <original>E</original>
    <variation>EPPE</variation>
    <location>
        <position position="1048"/>
    </location>
</feature>
<feature type="sequence conflict" description="In Ref. 1; AAA88096." evidence="15" ref="1">
    <original>P</original>
    <variation>K</variation>
    <location>
        <position position="1057"/>
    </location>
</feature>
<evidence type="ECO:0000250" key="1"/>
<evidence type="ECO:0000250" key="2">
    <source>
        <dbReference type="UniProtKB" id="P35438"/>
    </source>
</evidence>
<evidence type="ECO:0000250" key="3">
    <source>
        <dbReference type="UniProtKB" id="Q00959"/>
    </source>
</evidence>
<evidence type="ECO:0000250" key="4">
    <source>
        <dbReference type="UniProtKB" id="Q00960"/>
    </source>
</evidence>
<evidence type="ECO:0000250" key="5">
    <source>
        <dbReference type="UniProtKB" id="Q00961"/>
    </source>
</evidence>
<evidence type="ECO:0000250" key="6">
    <source>
        <dbReference type="UniProtKB" id="Q01098"/>
    </source>
</evidence>
<evidence type="ECO:0000255" key="7"/>
<evidence type="ECO:0000256" key="8">
    <source>
        <dbReference type="SAM" id="MobiDB-lite"/>
    </source>
</evidence>
<evidence type="ECO:0000269" key="9">
    <source>
    </source>
</evidence>
<evidence type="ECO:0000269" key="10">
    <source>
    </source>
</evidence>
<evidence type="ECO:0000269" key="11">
    <source>
    </source>
</evidence>
<evidence type="ECO:0000269" key="12">
    <source>
    </source>
</evidence>
<evidence type="ECO:0000269" key="13">
    <source>
    </source>
</evidence>
<evidence type="ECO:0000303" key="14">
    <source>
    </source>
</evidence>
<evidence type="ECO:0000305" key="15"/>
<evidence type="ECO:0000305" key="16">
    <source>
    </source>
</evidence>
<evidence type="ECO:0000312" key="17">
    <source>
        <dbReference type="HGNC" id="HGNC:4587"/>
    </source>
</evidence>
<evidence type="ECO:0007744" key="18">
    <source>
        <dbReference type="PDB" id="8E92"/>
    </source>
</evidence>
<evidence type="ECO:0007744" key="19">
    <source>
        <dbReference type="PDB" id="8E93"/>
    </source>
</evidence>
<evidence type="ECO:0007744" key="20">
    <source>
        <dbReference type="PDB" id="8E94"/>
    </source>
</evidence>
<evidence type="ECO:0007744" key="21">
    <source>
        <dbReference type="PDB" id="8E97"/>
    </source>
</evidence>
<evidence type="ECO:0007744" key="22">
    <source>
        <dbReference type="PDB" id="8E98"/>
    </source>
</evidence>
<evidence type="ECO:0007744" key="23">
    <source>
        <dbReference type="PDB" id="8E99"/>
    </source>
</evidence>
<reference key="1">
    <citation type="journal article" date="1996" name="Brain Res. Mol. Brain Res.">
        <title>Cloning of the cDNA for the human NMDA receptor NR2C subunit and its expression in the central nervous system and periphery.</title>
        <authorList>
            <person name="Lin Y.J."/>
            <person name="Bovetto S."/>
            <person name="Carver J.M."/>
            <person name="Giordano T."/>
        </authorList>
    </citation>
    <scope>NUCLEOTIDE SEQUENCE [MRNA]</scope>
    <scope>TISSUE SPECIFICITY</scope>
    <source>
        <tissue>Brain</tissue>
    </source>
</reference>
<reference key="2">
    <citation type="journal article" date="2006" name="Nature">
        <title>DNA sequence of human chromosome 17 and analysis of rearrangement in the human lineage.</title>
        <authorList>
            <person name="Zody M.C."/>
            <person name="Garber M."/>
            <person name="Adams D.J."/>
            <person name="Sharpe T."/>
            <person name="Harrow J."/>
            <person name="Lupski J.R."/>
            <person name="Nicholson C."/>
            <person name="Searle S.M."/>
            <person name="Wilming L."/>
            <person name="Young S.K."/>
            <person name="Abouelleil A."/>
            <person name="Allen N.R."/>
            <person name="Bi W."/>
            <person name="Bloom T."/>
            <person name="Borowsky M.L."/>
            <person name="Bugalter B.E."/>
            <person name="Butler J."/>
            <person name="Chang J.L."/>
            <person name="Chen C.-K."/>
            <person name="Cook A."/>
            <person name="Corum B."/>
            <person name="Cuomo C.A."/>
            <person name="de Jong P.J."/>
            <person name="DeCaprio D."/>
            <person name="Dewar K."/>
            <person name="FitzGerald M."/>
            <person name="Gilbert J."/>
            <person name="Gibson R."/>
            <person name="Gnerre S."/>
            <person name="Goldstein S."/>
            <person name="Grafham D.V."/>
            <person name="Grocock R."/>
            <person name="Hafez N."/>
            <person name="Hagopian D.S."/>
            <person name="Hart E."/>
            <person name="Norman C.H."/>
            <person name="Humphray S."/>
            <person name="Jaffe D.B."/>
            <person name="Jones M."/>
            <person name="Kamal M."/>
            <person name="Khodiyar V.K."/>
            <person name="LaButti K."/>
            <person name="Laird G."/>
            <person name="Lehoczky J."/>
            <person name="Liu X."/>
            <person name="Lokyitsang T."/>
            <person name="Loveland J."/>
            <person name="Lui A."/>
            <person name="Macdonald P."/>
            <person name="Major J.E."/>
            <person name="Matthews L."/>
            <person name="Mauceli E."/>
            <person name="McCarroll S.A."/>
            <person name="Mihalev A.H."/>
            <person name="Mudge J."/>
            <person name="Nguyen C."/>
            <person name="Nicol R."/>
            <person name="O'Leary S.B."/>
            <person name="Osoegawa K."/>
            <person name="Schwartz D.C."/>
            <person name="Shaw-Smith C."/>
            <person name="Stankiewicz P."/>
            <person name="Steward C."/>
            <person name="Swarbreck D."/>
            <person name="Venkataraman V."/>
            <person name="Whittaker C.A."/>
            <person name="Yang X."/>
            <person name="Zimmer A.R."/>
            <person name="Bradley A."/>
            <person name="Hubbard T."/>
            <person name="Birren B.W."/>
            <person name="Rogers J."/>
            <person name="Lander E.S."/>
            <person name="Nusbaum C."/>
        </authorList>
    </citation>
    <scope>NUCLEOTIDE SEQUENCE [LARGE SCALE GENOMIC DNA]</scope>
</reference>
<reference key="3">
    <citation type="journal article" date="2004" name="Genome Res.">
        <title>The status, quality, and expansion of the NIH full-length cDNA project: the Mammalian Gene Collection (MGC).</title>
        <authorList>
            <consortium name="The MGC Project Team"/>
        </authorList>
    </citation>
    <scope>NUCLEOTIDE SEQUENCE [LARGE SCALE MRNA]</scope>
</reference>
<reference key="4">
    <citation type="journal article" date="2011" name="Mol. Cell. Biol.">
        <title>Deficiency of sorting nexin 27 (SNX27) leads to growth retardation and elevated levels of N-methyl-D-aspartate receptor 2C (NR2C).</title>
        <authorList>
            <person name="Cai L."/>
            <person name="Loo L.S."/>
            <person name="Atlashkin V."/>
            <person name="Hanson B.J."/>
            <person name="Hong W."/>
        </authorList>
    </citation>
    <scope>INTERACTION WITH SNX27</scope>
</reference>
<reference key="5">
    <citation type="journal article" date="2016" name="Neuron">
        <title>Positive Allosteric Modulators of GluN2A-Containing NMDARs with Distinct Modes of Action and Impacts on Circuit Function.</title>
        <authorList>
            <person name="Hackos D.H."/>
            <person name="Lupardus P.J."/>
            <person name="Grand T."/>
            <person name="Chen Y."/>
            <person name="Wang T.M."/>
            <person name="Reynen P."/>
            <person name="Gustafson A."/>
            <person name="Wallweber H.J."/>
            <person name="Volgraf M."/>
            <person name="Sellers B.D."/>
            <person name="Schwarz J.B."/>
            <person name="Paoletti P."/>
            <person name="Sheng M."/>
            <person name="Zhou Q."/>
            <person name="Hanson J.E."/>
        </authorList>
    </citation>
    <scope>FUNCTION</scope>
    <scope>TRANSPORTER ACTIVITY</scope>
    <scope>SUBCELLULAR LOCATION</scope>
    <scope>SUBUNIT</scope>
</reference>
<reference evidence="18 19 20 21 22 23" key="6">
    <citation type="journal article" date="2022" name="Mol. Cell">
        <title>Structural insights into assembly and function of GluN1-2C, GluN1-2A-2C, and GluN1-2D NMDARs.</title>
        <authorList>
            <person name="Chou T.H."/>
            <person name="Kang H."/>
            <person name="Simorowski N."/>
            <person name="Traynelis S.F."/>
            <person name="Furukawa H."/>
        </authorList>
    </citation>
    <scope>STRUCTURE BY ELECTRON MICROSCOPY (3.71 ANGSTROMS) OF 26-849 IN COMPLEX WITH GRIN1 AND GRIN2A</scope>
    <scope>DISULFIDE BONDS</scope>
    <scope>FUNCTION</scope>
    <scope>SUBUNIT</scope>
    <scope>TOPOLOGY</scope>
    <scope>GLYCOSYLATION AT ASN-337 AND ASN-685</scope>
</reference>
<reference key="7">
    <citation type="journal article" date="2011" name="Transl. Psychiatry">
        <title>Rare mutations in N-methyl-D-aspartate glutamate receptors in autism spectrum disorders and schizophrenia.</title>
        <authorList>
            <consortium name="S2D team"/>
            <person name="Tarabeux J."/>
            <person name="Kebir O."/>
            <person name="Gauthier J."/>
            <person name="Hamdan F.F."/>
            <person name="Xiong L."/>
            <person name="Piton A."/>
            <person name="Spiegelman D."/>
            <person name="Henrion E."/>
            <person name="Millet B."/>
            <person name="Fathalli F."/>
            <person name="Joober R."/>
            <person name="Rapoport J.L."/>
            <person name="DeLisi L.E."/>
            <person name="Fombonne E."/>
            <person name="Mottron L."/>
            <person name="Forget-Dubois N."/>
            <person name="Boivin M."/>
            <person name="Michaud J.L."/>
            <person name="Drapeau P."/>
            <person name="Lafreniere R.G."/>
            <person name="Rouleau G.A."/>
            <person name="Krebs M.O."/>
        </authorList>
    </citation>
    <scope>VARIANTS 18-TRP--VAL-1233 DEL; ILE-90; VAL-166; THR-573; THR-641; CYS-679; THR-863; ARG-871; SER-877; ILE-911; ALA-982; PRO-989; LEU-995; TYR-1079; ALA-1141; ARG-1180 AND ILE-1196</scope>
</reference>
<proteinExistence type="evidence at protein level"/>
<dbReference type="EMBL" id="L76224">
    <property type="protein sequence ID" value="AAA88096.1"/>
    <property type="molecule type" value="mRNA"/>
</dbReference>
<dbReference type="EMBL" id="AC068874">
    <property type="status" value="NOT_ANNOTATED_CDS"/>
    <property type="molecule type" value="Genomic_DNA"/>
</dbReference>
<dbReference type="EMBL" id="BC140801">
    <property type="protein sequence ID" value="AAI40802.1"/>
    <property type="molecule type" value="mRNA"/>
</dbReference>
<dbReference type="CCDS" id="CCDS32724.1"/>
<dbReference type="RefSeq" id="NP_000826.2">
    <property type="nucleotide sequence ID" value="NM_000835.6"/>
</dbReference>
<dbReference type="RefSeq" id="XP_047291823.1">
    <property type="nucleotide sequence ID" value="XM_047435867.1"/>
</dbReference>
<dbReference type="PDB" id="8E92">
    <property type="method" value="EM"/>
    <property type="resolution" value="3.96 A"/>
    <property type="chains" value="B/D=26-849"/>
</dbReference>
<dbReference type="PDB" id="8E93">
    <property type="method" value="EM"/>
    <property type="resolution" value="3.71 A"/>
    <property type="chains" value="B/D=26-849"/>
</dbReference>
<dbReference type="PDB" id="8E94">
    <property type="method" value="EM"/>
    <property type="resolution" value="3.72 A"/>
    <property type="chains" value="B/D=26-849"/>
</dbReference>
<dbReference type="PDB" id="8E97">
    <property type="method" value="EM"/>
    <property type="resolution" value="4.19 A"/>
    <property type="chains" value="B/D=26-849"/>
</dbReference>
<dbReference type="PDB" id="8E98">
    <property type="method" value="EM"/>
    <property type="resolution" value="3.75 A"/>
    <property type="chains" value="B/D=26-849"/>
</dbReference>
<dbReference type="PDB" id="8E99">
    <property type="method" value="EM"/>
    <property type="resolution" value="4.24 A"/>
    <property type="chains" value="D=26-849"/>
</dbReference>
<dbReference type="PDBsum" id="8E92"/>
<dbReference type="PDBsum" id="8E93"/>
<dbReference type="PDBsum" id="8E94"/>
<dbReference type="PDBsum" id="8E97"/>
<dbReference type="PDBsum" id="8E98"/>
<dbReference type="PDBsum" id="8E99"/>
<dbReference type="EMDB" id="EMD-27953"/>
<dbReference type="EMDB" id="EMD-27954"/>
<dbReference type="EMDB" id="EMD-27955"/>
<dbReference type="EMDB" id="EMD-27958"/>
<dbReference type="EMDB" id="EMD-27959"/>
<dbReference type="EMDB" id="EMD-27960"/>
<dbReference type="EMDB" id="EMD-27961"/>
<dbReference type="SMR" id="Q14957"/>
<dbReference type="BioGRID" id="109162">
    <property type="interactions" value="16"/>
</dbReference>
<dbReference type="ComplexPortal" id="CPX-286">
    <property type="entry name" value="NMDA receptor complex, GluN1-GluN2C"/>
</dbReference>
<dbReference type="CORUM" id="Q14957"/>
<dbReference type="FunCoup" id="Q14957">
    <property type="interactions" value="890"/>
</dbReference>
<dbReference type="IntAct" id="Q14957">
    <property type="interactions" value="116"/>
</dbReference>
<dbReference type="MINT" id="Q14957"/>
<dbReference type="STRING" id="9606.ENSP00000293190"/>
<dbReference type="BindingDB" id="Q14957"/>
<dbReference type="ChEMBL" id="CHEMBL4109"/>
<dbReference type="DrugBank" id="DB00659">
    <property type="generic name" value="Acamprosate"/>
</dbReference>
<dbReference type="DrugBank" id="DB01238">
    <property type="generic name" value="Aripiprazole"/>
</dbReference>
<dbReference type="DrugBank" id="DB00289">
    <property type="generic name" value="Atomoxetine"/>
</dbReference>
<dbReference type="DrugBank" id="DB00647">
    <property type="generic name" value="Dextropropoxyphene"/>
</dbReference>
<dbReference type="DrugBank" id="DB00843">
    <property type="generic name" value="Donepezil"/>
</dbReference>
<dbReference type="DrugBank" id="DB00228">
    <property type="generic name" value="Enflurane"/>
</dbReference>
<dbReference type="DrugBank" id="DB11823">
    <property type="generic name" value="Esketamine"/>
</dbReference>
<dbReference type="DrugBank" id="DB13146">
    <property type="generic name" value="Fluciclovine (18F)"/>
</dbReference>
<dbReference type="DrugBank" id="DB06741">
    <property type="generic name" value="Gavestinel"/>
</dbReference>
<dbReference type="DrugBank" id="DB00142">
    <property type="generic name" value="Glutamic acid"/>
</dbReference>
<dbReference type="DrugBank" id="DB00145">
    <property type="generic name" value="Glycine"/>
</dbReference>
<dbReference type="DrugBank" id="DB00874">
    <property type="generic name" value="Guaifenesin"/>
</dbReference>
<dbReference type="DrugBank" id="DB06738">
    <property type="generic name" value="Ketobemidone"/>
</dbReference>
<dbReference type="DrugBank" id="DB09409">
    <property type="generic name" value="Magnesium acetate tetrahydrate"/>
</dbReference>
<dbReference type="DrugBank" id="DB09481">
    <property type="generic name" value="Magnesium carbonate"/>
</dbReference>
<dbReference type="DrugBank" id="DB01043">
    <property type="generic name" value="Memantine"/>
</dbReference>
<dbReference type="DrugBank" id="DB00454">
    <property type="generic name" value="Meperidine"/>
</dbReference>
<dbReference type="DrugBank" id="DB00333">
    <property type="generic name" value="Methadone"/>
</dbReference>
<dbReference type="DrugBank" id="DB04896">
    <property type="generic name" value="Milnacipran"/>
</dbReference>
<dbReference type="DrugBank" id="DB00312">
    <property type="generic name" value="Pentobarbital"/>
</dbReference>
<dbReference type="DrugBank" id="DB01174">
    <property type="generic name" value="Phenobarbital"/>
</dbReference>
<dbReference type="DrugBank" id="DB01708">
    <property type="generic name" value="Prasterone"/>
</dbReference>
<dbReference type="DrugBank" id="DB00418">
    <property type="generic name" value="Secobarbital"/>
</dbReference>
<dbReference type="DrugBank" id="DB01520">
    <property type="generic name" value="Tenocyclidine"/>
</dbReference>
<dbReference type="DrugBank" id="DB00193">
    <property type="generic name" value="Tramadol"/>
</dbReference>
<dbReference type="DrugCentral" id="Q14957"/>
<dbReference type="GuidetoPHARMACOLOGY" id="458"/>
<dbReference type="TCDB" id="1.A.10.1.3">
    <property type="family name" value="the glutamate-gated ion channel (gic) family of neurotransmitter receptors"/>
</dbReference>
<dbReference type="GlyCosmos" id="Q14957">
    <property type="glycosylation" value="6 sites, No reported glycans"/>
</dbReference>
<dbReference type="GlyGen" id="Q14957">
    <property type="glycosylation" value="8 sites"/>
</dbReference>
<dbReference type="iPTMnet" id="Q14957"/>
<dbReference type="PhosphoSitePlus" id="Q14957"/>
<dbReference type="BioMuta" id="GRIN2C"/>
<dbReference type="DMDM" id="313104210"/>
<dbReference type="jPOST" id="Q14957"/>
<dbReference type="MassIVE" id="Q14957"/>
<dbReference type="PaxDb" id="9606-ENSP00000293190"/>
<dbReference type="PeptideAtlas" id="Q14957"/>
<dbReference type="ProteomicsDB" id="60260"/>
<dbReference type="ABCD" id="Q14957">
    <property type="antibodies" value="3 sequenced antibodies"/>
</dbReference>
<dbReference type="Antibodypedia" id="19474">
    <property type="antibodies" value="272 antibodies from 35 providers"/>
</dbReference>
<dbReference type="DNASU" id="2905"/>
<dbReference type="Ensembl" id="ENST00000293190.10">
    <property type="protein sequence ID" value="ENSP00000293190.5"/>
    <property type="gene ID" value="ENSG00000161509.14"/>
</dbReference>
<dbReference type="GeneID" id="2905"/>
<dbReference type="KEGG" id="hsa:2905"/>
<dbReference type="MANE-Select" id="ENST00000293190.10">
    <property type="protein sequence ID" value="ENSP00000293190.5"/>
    <property type="RefSeq nucleotide sequence ID" value="NM_000835.6"/>
    <property type="RefSeq protein sequence ID" value="NP_000826.2"/>
</dbReference>
<dbReference type="UCSC" id="uc002jlt.3">
    <property type="organism name" value="human"/>
</dbReference>
<dbReference type="AGR" id="HGNC:4587"/>
<dbReference type="CTD" id="2905"/>
<dbReference type="DisGeNET" id="2905"/>
<dbReference type="GeneCards" id="GRIN2C"/>
<dbReference type="HGNC" id="HGNC:4587">
    <property type="gene designation" value="GRIN2C"/>
</dbReference>
<dbReference type="HPA" id="ENSG00000161509">
    <property type="expression patterns" value="Tissue enriched (brain)"/>
</dbReference>
<dbReference type="MIM" id="138254">
    <property type="type" value="gene"/>
</dbReference>
<dbReference type="neXtProt" id="NX_Q14957"/>
<dbReference type="OpenTargets" id="ENSG00000161509"/>
<dbReference type="PharmGKB" id="PA28981"/>
<dbReference type="VEuPathDB" id="HostDB:ENSG00000161509"/>
<dbReference type="eggNOG" id="KOG1053">
    <property type="taxonomic scope" value="Eukaryota"/>
</dbReference>
<dbReference type="GeneTree" id="ENSGT00940000156964"/>
<dbReference type="HOGENOM" id="CLU_002039_1_0_1"/>
<dbReference type="InParanoid" id="Q14957"/>
<dbReference type="OMA" id="TVSNAMF"/>
<dbReference type="OrthoDB" id="5984008at2759"/>
<dbReference type="PAN-GO" id="Q14957">
    <property type="GO annotations" value="6 GO annotations based on evolutionary models"/>
</dbReference>
<dbReference type="PhylomeDB" id="Q14957"/>
<dbReference type="TreeFam" id="TF314731"/>
<dbReference type="PathwayCommons" id="Q14957"/>
<dbReference type="Reactome" id="R-HSA-438066">
    <property type="pathway name" value="Unblocking of NMDA receptors, glutamate binding and activation"/>
</dbReference>
<dbReference type="Reactome" id="R-HSA-6794361">
    <property type="pathway name" value="Neurexins and neuroligins"/>
</dbReference>
<dbReference type="Reactome" id="R-HSA-8849932">
    <property type="pathway name" value="Synaptic adhesion-like molecules"/>
</dbReference>
<dbReference type="Reactome" id="R-HSA-9609736">
    <property type="pathway name" value="Assembly and cell surface presentation of NMDA receptors"/>
</dbReference>
<dbReference type="Reactome" id="R-HSA-9617324">
    <property type="pathway name" value="Negative regulation of NMDA receptor-mediated neuronal transmission"/>
</dbReference>
<dbReference type="Reactome" id="R-HSA-9620244">
    <property type="pathway name" value="Long-term potentiation"/>
</dbReference>
<dbReference type="SignaLink" id="Q14957"/>
<dbReference type="SIGNOR" id="Q14957"/>
<dbReference type="BioGRID-ORCS" id="2905">
    <property type="hits" value="10 hits in 1157 CRISPR screens"/>
</dbReference>
<dbReference type="GeneWiki" id="GRIN2C"/>
<dbReference type="GenomeRNAi" id="2905"/>
<dbReference type="Pharos" id="Q14957">
    <property type="development level" value="Tclin"/>
</dbReference>
<dbReference type="PRO" id="PR:Q14957"/>
<dbReference type="Proteomes" id="UP000005640">
    <property type="component" value="Chromosome 17"/>
</dbReference>
<dbReference type="RNAct" id="Q14957">
    <property type="molecule type" value="protein"/>
</dbReference>
<dbReference type="Bgee" id="ENSG00000161509">
    <property type="expression patterns" value="Expressed in right hemisphere of cerebellum and 104 other cell types or tissues"/>
</dbReference>
<dbReference type="ExpressionAtlas" id="Q14957">
    <property type="expression patterns" value="baseline and differential"/>
</dbReference>
<dbReference type="GO" id="GO:0005789">
    <property type="term" value="C:endoplasmic reticulum membrane"/>
    <property type="evidence" value="ECO:0000304"/>
    <property type="project" value="Reactome"/>
</dbReference>
<dbReference type="GO" id="GO:0098978">
    <property type="term" value="C:glutamatergic synapse"/>
    <property type="evidence" value="ECO:0007669"/>
    <property type="project" value="Ensembl"/>
</dbReference>
<dbReference type="GO" id="GO:0017146">
    <property type="term" value="C:NMDA selective glutamate receptor complex"/>
    <property type="evidence" value="ECO:0000314"/>
    <property type="project" value="UniProtKB"/>
</dbReference>
<dbReference type="GO" id="GO:0005886">
    <property type="term" value="C:plasma membrane"/>
    <property type="evidence" value="ECO:0000314"/>
    <property type="project" value="UniProtKB"/>
</dbReference>
<dbReference type="GO" id="GO:0098839">
    <property type="term" value="C:postsynaptic density membrane"/>
    <property type="evidence" value="ECO:0000318"/>
    <property type="project" value="GO_Central"/>
</dbReference>
<dbReference type="GO" id="GO:0045211">
    <property type="term" value="C:postsynaptic membrane"/>
    <property type="evidence" value="ECO:0000250"/>
    <property type="project" value="UniProtKB"/>
</dbReference>
<dbReference type="GO" id="GO:0005261">
    <property type="term" value="F:monoatomic cation channel activity"/>
    <property type="evidence" value="ECO:0007669"/>
    <property type="project" value="Ensembl"/>
</dbReference>
<dbReference type="GO" id="GO:0004972">
    <property type="term" value="F:NMDA glutamate receptor activity"/>
    <property type="evidence" value="ECO:0000314"/>
    <property type="project" value="UniProtKB"/>
</dbReference>
<dbReference type="GO" id="GO:1904315">
    <property type="term" value="F:transmitter-gated monoatomic ion channel activity involved in regulation of postsynaptic membrane potential"/>
    <property type="evidence" value="ECO:0000318"/>
    <property type="project" value="GO_Central"/>
</dbReference>
<dbReference type="GO" id="GO:0007420">
    <property type="term" value="P:brain development"/>
    <property type="evidence" value="ECO:0000303"/>
    <property type="project" value="ARUK-UCL"/>
</dbReference>
<dbReference type="GO" id="GO:0097553">
    <property type="term" value="P:calcium ion transmembrane import into cytosol"/>
    <property type="evidence" value="ECO:0000314"/>
    <property type="project" value="UniProtKB"/>
</dbReference>
<dbReference type="GO" id="GO:0033058">
    <property type="term" value="P:directional locomotion"/>
    <property type="evidence" value="ECO:0007669"/>
    <property type="project" value="Ensembl"/>
</dbReference>
<dbReference type="GO" id="GO:0098976">
    <property type="term" value="P:excitatory chemical synaptic transmission"/>
    <property type="evidence" value="ECO:0000303"/>
    <property type="project" value="ARUK-UCL"/>
</dbReference>
<dbReference type="GO" id="GO:0060079">
    <property type="term" value="P:excitatory postsynaptic potential"/>
    <property type="evidence" value="ECO:0000318"/>
    <property type="project" value="GO_Central"/>
</dbReference>
<dbReference type="GO" id="GO:0007215">
    <property type="term" value="P:glutamate receptor signaling pathway"/>
    <property type="evidence" value="ECO:0000304"/>
    <property type="project" value="ProtInc"/>
</dbReference>
<dbReference type="GO" id="GO:0035235">
    <property type="term" value="P:ionotropic glutamate receptor signaling pathway"/>
    <property type="evidence" value="ECO:0000303"/>
    <property type="project" value="ComplexPortal"/>
</dbReference>
<dbReference type="GO" id="GO:0060291">
    <property type="term" value="P:long-term synaptic potentiation"/>
    <property type="evidence" value="ECO:0000318"/>
    <property type="project" value="GO_Central"/>
</dbReference>
<dbReference type="GO" id="GO:0098655">
    <property type="term" value="P:monoatomic cation transmembrane transport"/>
    <property type="evidence" value="ECO:0000314"/>
    <property type="project" value="UniProt"/>
</dbReference>
<dbReference type="GO" id="GO:0042177">
    <property type="term" value="P:negative regulation of protein catabolic process"/>
    <property type="evidence" value="ECO:0007669"/>
    <property type="project" value="Ensembl"/>
</dbReference>
<dbReference type="GO" id="GO:0050885">
    <property type="term" value="P:neuromuscular process controlling balance"/>
    <property type="evidence" value="ECO:0007669"/>
    <property type="project" value="Ensembl"/>
</dbReference>
<dbReference type="GO" id="GO:2000463">
    <property type="term" value="P:positive regulation of excitatory postsynaptic potential"/>
    <property type="evidence" value="ECO:0000303"/>
    <property type="project" value="ComplexPortal"/>
</dbReference>
<dbReference type="GO" id="GO:0051968">
    <property type="term" value="P:positive regulation of synaptic transmission, glutamatergic"/>
    <property type="evidence" value="ECO:0000303"/>
    <property type="project" value="ComplexPortal"/>
</dbReference>
<dbReference type="GO" id="GO:1903539">
    <property type="term" value="P:protein localization to postsynaptic membrane"/>
    <property type="evidence" value="ECO:0007669"/>
    <property type="project" value="Ensembl"/>
</dbReference>
<dbReference type="GO" id="GO:1904062">
    <property type="term" value="P:regulation of monoatomic cation transmembrane transport"/>
    <property type="evidence" value="ECO:0000303"/>
    <property type="project" value="ComplexPortal"/>
</dbReference>
<dbReference type="GO" id="GO:0048168">
    <property type="term" value="P:regulation of neuronal synaptic plasticity"/>
    <property type="evidence" value="ECO:0000303"/>
    <property type="project" value="ComplexPortal"/>
</dbReference>
<dbReference type="GO" id="GO:0048167">
    <property type="term" value="P:regulation of synaptic plasticity"/>
    <property type="evidence" value="ECO:0000250"/>
    <property type="project" value="UniProt"/>
</dbReference>
<dbReference type="GO" id="GO:0009611">
    <property type="term" value="P:response to wounding"/>
    <property type="evidence" value="ECO:0007669"/>
    <property type="project" value="Ensembl"/>
</dbReference>
<dbReference type="GO" id="GO:0035249">
    <property type="term" value="P:synaptic transmission, glutamatergic"/>
    <property type="evidence" value="ECO:0000318"/>
    <property type="project" value="GO_Central"/>
</dbReference>
<dbReference type="CDD" id="cd06378">
    <property type="entry name" value="PBP1_iGluR_NMDA_NR2"/>
    <property type="match status" value="1"/>
</dbReference>
<dbReference type="CDD" id="cd13718">
    <property type="entry name" value="PBP2_iGluR_NMDA_Nr2"/>
    <property type="match status" value="1"/>
</dbReference>
<dbReference type="FunFam" id="3.40.190.10:FF:000026">
    <property type="entry name" value="Glutamate ionotropic receptor NMDA type subunit 2A"/>
    <property type="match status" value="1"/>
</dbReference>
<dbReference type="FunFam" id="3.40.50.2300:FF:000020">
    <property type="entry name" value="Glutamate receptor ionotropic, NMDA 2B, putative"/>
    <property type="match status" value="1"/>
</dbReference>
<dbReference type="FunFam" id="3.40.190.10:FF:000007">
    <property type="entry name" value="Putative glutamate receptor ionotropic NMDA 2B"/>
    <property type="match status" value="1"/>
</dbReference>
<dbReference type="Gene3D" id="3.40.50.2300">
    <property type="match status" value="2"/>
</dbReference>
<dbReference type="Gene3D" id="3.40.190.10">
    <property type="entry name" value="Periplasmic binding protein-like II"/>
    <property type="match status" value="2"/>
</dbReference>
<dbReference type="InterPro" id="IPR001828">
    <property type="entry name" value="ANF_lig-bd_rcpt"/>
</dbReference>
<dbReference type="InterPro" id="IPR019594">
    <property type="entry name" value="Glu/Gly-bd"/>
</dbReference>
<dbReference type="InterPro" id="IPR001508">
    <property type="entry name" value="Iono_Glu_rcpt_met"/>
</dbReference>
<dbReference type="InterPro" id="IPR015683">
    <property type="entry name" value="Ionotropic_Glu_rcpt"/>
</dbReference>
<dbReference type="InterPro" id="IPR001320">
    <property type="entry name" value="Iontro_rcpt_C"/>
</dbReference>
<dbReference type="InterPro" id="IPR018884">
    <property type="entry name" value="NMDAR2_C"/>
</dbReference>
<dbReference type="InterPro" id="IPR028082">
    <property type="entry name" value="Peripla_BP_I"/>
</dbReference>
<dbReference type="PANTHER" id="PTHR18966">
    <property type="entry name" value="IONOTROPIC GLUTAMATE RECEPTOR"/>
    <property type="match status" value="1"/>
</dbReference>
<dbReference type="Pfam" id="PF01094">
    <property type="entry name" value="ANF_receptor"/>
    <property type="match status" value="1"/>
</dbReference>
<dbReference type="Pfam" id="PF00060">
    <property type="entry name" value="Lig_chan"/>
    <property type="match status" value="1"/>
</dbReference>
<dbReference type="Pfam" id="PF10613">
    <property type="entry name" value="Lig_chan-Glu_bd"/>
    <property type="match status" value="1"/>
</dbReference>
<dbReference type="Pfam" id="PF10565">
    <property type="entry name" value="NMDAR2_C"/>
    <property type="match status" value="1"/>
</dbReference>
<dbReference type="PRINTS" id="PR00177">
    <property type="entry name" value="NMDARECEPTOR"/>
</dbReference>
<dbReference type="SMART" id="SM00918">
    <property type="entry name" value="Lig_chan-Glu_bd"/>
    <property type="match status" value="1"/>
</dbReference>
<dbReference type="SMART" id="SM00079">
    <property type="entry name" value="PBPe"/>
    <property type="match status" value="1"/>
</dbReference>
<dbReference type="SUPFAM" id="SSF53822">
    <property type="entry name" value="Periplasmic binding protein-like I"/>
    <property type="match status" value="1"/>
</dbReference>
<dbReference type="SUPFAM" id="SSF53850">
    <property type="entry name" value="Periplasmic binding protein-like II"/>
    <property type="match status" value="1"/>
</dbReference>
<accession>Q14957</accession>
<accession>B2RTT1</accession>
<organism>
    <name type="scientific">Homo sapiens</name>
    <name type="common">Human</name>
    <dbReference type="NCBI Taxonomy" id="9606"/>
    <lineage>
        <taxon>Eukaryota</taxon>
        <taxon>Metazoa</taxon>
        <taxon>Chordata</taxon>
        <taxon>Craniata</taxon>
        <taxon>Vertebrata</taxon>
        <taxon>Euteleostomi</taxon>
        <taxon>Mammalia</taxon>
        <taxon>Eutheria</taxon>
        <taxon>Euarchontoglires</taxon>
        <taxon>Primates</taxon>
        <taxon>Haplorrhini</taxon>
        <taxon>Catarrhini</taxon>
        <taxon>Hominidae</taxon>
        <taxon>Homo</taxon>
    </lineage>
</organism>
<name>NMDE3_HUMAN</name>
<gene>
    <name evidence="17" type="primary">GRIN2C</name>
    <name type="synonym">NMDAR2C</name>
</gene>
<protein>
    <recommendedName>
        <fullName evidence="15">Glutamate receptor ionotropic, NMDA 2C</fullName>
        <shortName evidence="5">GluN2C</shortName>
    </recommendedName>
    <alternativeName>
        <fullName evidence="6">Glutamate [NMDA] receptor subunit epsilon-3</fullName>
    </alternativeName>
    <alternativeName>
        <fullName>N-methyl D-aspartate receptor subtype 2C</fullName>
        <shortName evidence="5">NMDAR2C</shortName>
        <shortName evidence="14">NR2C</shortName>
    </alternativeName>
</protein>
<sequence>MGGALGPALLLTSLFGAWAGLGPGQGEQGMTVAVVFSSSGPPQAQFRARLTPQSFLDLPLEIQPLTVGVNTTNPSSLLTQICGLLGAAHVHGIVFEDNVDTEAVAQILDFISSQTHVPILSISGGSAVVLTPKEPGSAFLQLGVSLEQQLQVLFKVLEEYDWSAFAVITSLHPGHALFLEGVRAVADASHVSWRLLDVVTLELGPGGPRARTQRLLRQLDAPVFVAYCSREEAEVLFAEAAQAGLVGPGHVWLVPNLALGSTDAPPATFPVGLISVVTESWRLSLRQKVRDGVAILALGAHSYWRQHGTLPAPAGDCRVHPGPVSPAREAFYRHLLNVTWEGRDFSFSPGGYLVQPTMVVIALNRHRLWEMVGRWEHGVLYMKYPVWPRYSASLQPVVDSRHLTVATLEERPFVIVESPDPGTGGCVPNTVPCRRQSNHTFSSGDVAPYTKLCCKGFCIDILKKLARVVKFSYDLYLVTNGKHGKRVRGVWNGMIGEVYYKRADMAIGSLTINEERSEIVDFSVPFVETGISVMVARSNGTVSPSAFLEPYSPAVWVMMFVMCLTVVAITVFMFEYFSPVSYNQNLTRGKKSGGPAFTIGKSVWLLWALVFNNSVPIENPRGTTSKIMVLVWAFFAVIFLASYTANLAAFMIQEQYIDTVSGLSDKKFQRPQDQYPPFRFGTVPNGSTERNIRSNYRDMHTHMVKFNQRSVEDALTSLKMGKLDAFIYDAAVLNYMAGKDEGCKLVTIGSGKVFATTGYGIAMQKDSHWKRAIDLALLQFLGDGETQKLETVWLSGICQNEKNEVMSSKLDIDNMAGVFYMLLVAMGLALLVFAWEHLVYWKLRHSVPNSSQLDFLLAFSRGIYSCFSGVQSLASPPRQASPDLTASSAQASVLKMLQAARDMVTTAGVSSSLDRATRTIENWGGGRRAPPPSPCPTPRSGPSPCLPTPDPPPEPSPTGWGPPDGGRAALVRRAPQPPGRPPTPGPPLSDVSRVSRRPAWEARWPVRTGHCGRHLSASERPLSPARCHYSSFPRADRSGRPFLPLFPELEDLPLLGPEQLARREALLHAAWARGSRPRHASLPSSVAEAFARPSSLPAGCTGPACARPDGHSACRRLAQAQSMCLPIYREACQEGEQAGAPAWQHRQHVCLHAHAHLPFCWGAVCPHLPPCASHGSWLSGAWGPLGHRGRTLGLGTGYRDSGGLDEISRVARGTQGFPGPCTWRRISSLESEV</sequence>
<comment type="function">
    <text evidence="2 6 11 12">Component of N-methyl-D-aspartate (NMDA) receptors (NMDARs) that function as heterotetrameric, ligand-gated cation channels with high calcium permeability and voltage-dependent block by Mg(2+) (PubMed:26875626, PubMed:36309015). Participates in synaptic plasticity for learning and memory formation by contributing to the slow phase of excitatory postsynaptic current and long-term synaptic potentiation (By similarity). Channel activation requires binding of the neurotransmitter L-glutamate to the GluN2 subunit, glycine or D-serine binding to the GluN1 subunit, plus membrane depolarization to eliminate channel inhibition by Mg(2+) (PubMed:26875626, PubMed:36309015). NMDARs mediate simultaneously the potasium efflux and the influx of calcium and sodium (By similarity). Each GluN2 subunit confers differential attributes to channel properties, including activation, deactivation and desensitization kinetics, pH sensitivity, Ca2(+) permeability, and binding to allosteric modulators (PubMed:26875626).</text>
</comment>
<comment type="catalytic activity">
    <reaction evidence="11">
        <text>Ca(2+)(in) = Ca(2+)(out)</text>
        <dbReference type="Rhea" id="RHEA:29671"/>
        <dbReference type="ChEBI" id="CHEBI:29108"/>
    </reaction>
</comment>
<comment type="catalytic activity">
    <reaction evidence="2">
        <text>Na(+)(in) = Na(+)(out)</text>
        <dbReference type="Rhea" id="RHEA:34963"/>
        <dbReference type="ChEBI" id="CHEBI:29101"/>
    </reaction>
</comment>
<comment type="catalytic activity">
    <reaction evidence="2">
        <text>K(+)(in) = K(+)(out)</text>
        <dbReference type="Rhea" id="RHEA:29463"/>
        <dbReference type="ChEBI" id="CHEBI:29103"/>
    </reaction>
</comment>
<comment type="subunit">
    <text evidence="5 9 11 12 15">Heterotetramer (PubMed:36309015). Forms heterotetrameric channels composed of two GluN1/zeta subunits (GRIN1), and two identical GluN2/epsilon subunits (GRIN2A, GRIN2B, GRIN2C or GRIN2D) or GluN3 subunits (GRIN3A or GRIN3B) (in vitro) (PubMed:26875626, PubMed:36309015). In vivo, the subunit composition may depend on the expression levels of the different subunits (Probable). Interacts with PDZ domains of PATJ and DLG4 (By similarity). Interacts (via PDZ-binding motif) with SNX27 (via PDZ domain); the interaction is required for recycling to the plasma membrane when endocytosed and prevent degradation in lysosomes (PubMed:21300787).</text>
</comment>
<comment type="interaction">
    <interactant intactId="EBI-8285963">
        <id>Q14957</id>
    </interactant>
    <interactant intactId="EBI-10173507">
        <id>Q6UY14-3</id>
        <label>ADAMTSL4</label>
    </interactant>
    <organismsDiffer>false</organismsDiffer>
    <experiments>3</experiments>
</comment>
<comment type="interaction">
    <interactant intactId="EBI-8285963">
        <id>Q14957</id>
    </interactant>
    <interactant intactId="EBI-5280499">
        <id>Q66PJ3-4</id>
        <label>ARL6IP4</label>
    </interactant>
    <organismsDiffer>false</organismsDiffer>
    <experiments>3</experiments>
</comment>
<comment type="interaction">
    <interactant intactId="EBI-8285963">
        <id>Q14957</id>
    </interactant>
    <interactant intactId="EBI-9089489">
        <id>Q96FT7-4</id>
        <label>ASIC4</label>
    </interactant>
    <organismsDiffer>false</organismsDiffer>
    <experiments>3</experiments>
</comment>
<comment type="interaction">
    <interactant intactId="EBI-8285963">
        <id>Q14957</id>
    </interactant>
    <interactant intactId="EBI-2548012">
        <id>Q9H2G9</id>
        <label>BLZF1</label>
    </interactant>
    <organismsDiffer>false</organismsDiffer>
    <experiments>3</experiments>
</comment>
<comment type="interaction">
    <interactant intactId="EBI-8285963">
        <id>Q14957</id>
    </interactant>
    <interactant intactId="EBI-5666615">
        <id>Q5PSV4</id>
        <label>BRMS1L</label>
    </interactant>
    <organismsDiffer>false</organismsDiffer>
    <experiments>3</experiments>
</comment>
<comment type="interaction">
    <interactant intactId="EBI-8285963">
        <id>Q14957</id>
    </interactant>
    <interactant intactId="EBI-23662416">
        <id>Q9ULD4-2</id>
        <label>BRPF3</label>
    </interactant>
    <organismsDiffer>false</organismsDiffer>
    <experiments>3</experiments>
</comment>
<comment type="interaction">
    <interactant intactId="EBI-8285963">
        <id>Q14957</id>
    </interactant>
    <interactant intactId="EBI-10693038">
        <id>Q9NSI6-4</id>
        <label>BRWD1</label>
    </interactant>
    <organismsDiffer>false</organismsDiffer>
    <experiments>3</experiments>
</comment>
<comment type="interaction">
    <interactant intactId="EBI-8285963">
        <id>Q14957</id>
    </interactant>
    <interactant intactId="EBI-18036948">
        <id>Q3SXR2</id>
        <label>C3orf36</label>
    </interactant>
    <organismsDiffer>false</organismsDiffer>
    <experiments>3</experiments>
</comment>
<comment type="interaction">
    <interactant intactId="EBI-8285963">
        <id>Q14957</id>
    </interactant>
    <interactant intactId="EBI-751596">
        <id>Q96LL4</id>
        <label>C8orf48</label>
    </interactant>
    <organismsDiffer>false</organismsDiffer>
    <experiments>3</experiments>
</comment>
<comment type="interaction">
    <interactant intactId="EBI-8285963">
        <id>Q14957</id>
    </interactant>
    <interactant intactId="EBI-21796846">
        <id>Q5M9N0-2</id>
        <label>CCDC158</label>
    </interactant>
    <organismsDiffer>false</organismsDiffer>
    <experiments>3</experiments>
</comment>
<comment type="interaction">
    <interactant intactId="EBI-8285963">
        <id>Q14957</id>
    </interactant>
    <interactant intactId="EBI-375096">
        <id>P24941</id>
        <label>CDK2</label>
    </interactant>
    <organismsDiffer>false</organismsDiffer>
    <experiments>3</experiments>
</comment>
<comment type="interaction">
    <interactant intactId="EBI-8285963">
        <id>Q14957</id>
    </interactant>
    <interactant intactId="EBI-3913685">
        <id>O95674</id>
        <label>CDS2</label>
    </interactant>
    <organismsDiffer>false</organismsDiffer>
    <experiments>3</experiments>
</comment>
<comment type="interaction">
    <interactant intactId="EBI-8285963">
        <id>Q14957</id>
    </interactant>
    <interactant intactId="EBI-749253">
        <id>Q8WUX9</id>
        <label>CHMP7</label>
    </interactant>
    <organismsDiffer>false</organismsDiffer>
    <experiments>3</experiments>
</comment>
<comment type="interaction">
    <interactant intactId="EBI-8285963">
        <id>Q14957</id>
    </interactant>
    <interactant intactId="EBI-744045">
        <id>Q9Y3D0</id>
        <label>CIAO2B</label>
    </interactant>
    <organismsDiffer>false</organismsDiffer>
    <experiments>3</experiments>
</comment>
<comment type="interaction">
    <interactant intactId="EBI-8285963">
        <id>Q14957</id>
    </interactant>
    <interactant intactId="EBI-12375799">
        <id>P02458-1</id>
        <label>COL2A1</label>
    </interactant>
    <organismsDiffer>false</organismsDiffer>
    <experiments>3</experiments>
</comment>
<comment type="interaction">
    <interactant intactId="EBI-8285963">
        <id>Q14957</id>
    </interactant>
    <interactant intactId="EBI-751783">
        <id>Q9UJU6</id>
        <label>DBNL</label>
    </interactant>
    <organismsDiffer>false</organismsDiffer>
    <experiments>3</experiments>
</comment>
<comment type="interaction">
    <interactant intactId="EBI-8285963">
        <id>Q14957</id>
    </interactant>
    <interactant intactId="EBI-12346463">
        <id>Q6ZN54-2</id>
        <label>DEF8</label>
    </interactant>
    <organismsDiffer>false</organismsDiffer>
    <experiments>3</experiments>
</comment>
<comment type="interaction">
    <interactant intactId="EBI-8285963">
        <id>Q14957</id>
    </interactant>
    <interactant intactId="EBI-25842538">
        <id>Q8NDP9</id>
        <label>DKFZp547K2416</label>
    </interactant>
    <organismsDiffer>false</organismsDiffer>
    <experiments>3</experiments>
</comment>
<comment type="interaction">
    <interactant intactId="EBI-8285963">
        <id>Q14957</id>
    </interactant>
    <interactant intactId="EBI-357481">
        <id>Q12959</id>
        <label>DLG1</label>
    </interactant>
    <organismsDiffer>false</organismsDiffer>
    <experiments>2</experiments>
</comment>
<comment type="interaction">
    <interactant intactId="EBI-8285963">
        <id>Q14957</id>
    </interactant>
    <interactant intactId="EBI-80389">
        <id>P78352</id>
        <label>DLG4</label>
    </interactant>
    <organismsDiffer>false</organismsDiffer>
    <experiments>4</experiments>
</comment>
<comment type="interaction">
    <interactant intactId="EBI-8285963">
        <id>Q14957</id>
    </interactant>
    <interactant intactId="EBI-741400">
        <id>Q7Z7J5</id>
        <label>DPPA2</label>
    </interactant>
    <organismsDiffer>false</organismsDiffer>
    <experiments>3</experiments>
</comment>
<comment type="interaction">
    <interactant intactId="EBI-8285963">
        <id>Q14957</id>
    </interactant>
    <interactant intactId="EBI-12275416">
        <id>Q14117</id>
        <label>DPYS</label>
    </interactant>
    <organismsDiffer>false</organismsDiffer>
    <experiments>3</experiments>
</comment>
<comment type="interaction">
    <interactant intactId="EBI-8285963">
        <id>Q14957</id>
    </interactant>
    <interactant intactId="EBI-724653">
        <id>Q9BPU6</id>
        <label>DPYSL5</label>
    </interactant>
    <organismsDiffer>false</organismsDiffer>
    <experiments>3</experiments>
</comment>
<comment type="interaction">
    <interactant intactId="EBI-8285963">
        <id>Q14957</id>
    </interactant>
    <interactant intactId="EBI-3443946">
        <id>Q9Y6W6</id>
        <label>DUSP10</label>
    </interactant>
    <organismsDiffer>false</organismsDiffer>
    <experiments>3</experiments>
</comment>
<comment type="interaction">
    <interactant intactId="EBI-8285963">
        <id>Q14957</id>
    </interactant>
    <interactant intactId="EBI-7779316">
        <id>A0AVK6</id>
        <label>E2F8</label>
    </interactant>
    <organismsDiffer>false</organismsDiffer>
    <experiments>3</experiments>
</comment>
<comment type="interaction">
    <interactant intactId="EBI-8285963">
        <id>Q14957</id>
    </interactant>
    <interactant intactId="EBI-10248874">
        <id>Q658K8</id>
        <label>EEF1DP3</label>
    </interactant>
    <organismsDiffer>false</organismsDiffer>
    <experiments>3</experiments>
</comment>
<comment type="interaction">
    <interactant intactId="EBI-8285963">
        <id>Q14957</id>
    </interactant>
    <interactant intactId="EBI-395274">
        <id>O00472</id>
        <label>ELL2</label>
    </interactant>
    <organismsDiffer>false</organismsDiffer>
    <experiments>3</experiments>
</comment>
<comment type="interaction">
    <interactant intactId="EBI-8285963">
        <id>Q14957</id>
    </interactant>
    <interactant intactId="EBI-11793142">
        <id>Q96GL9</id>
        <label>FAM163A</label>
    </interactant>
    <organismsDiffer>false</organismsDiffer>
    <experiments>3</experiments>
</comment>
<comment type="interaction">
    <interactant intactId="EBI-8285963">
        <id>Q14957</id>
    </interactant>
    <interactant intactId="EBI-744510">
        <id>P15407</id>
        <label>FOSL1</label>
    </interactant>
    <organismsDiffer>false</organismsDiffer>
    <experiments>3</experiments>
</comment>
<comment type="interaction">
    <interactant intactId="EBI-8285963">
        <id>Q14957</id>
    </interactant>
    <interactant intactId="EBI-618189">
        <id>Q06547-2</id>
        <label>GABPB1</label>
    </interactant>
    <organismsDiffer>false</organismsDiffer>
    <experiments>3</experiments>
</comment>
<comment type="interaction">
    <interactant intactId="EBI-8285963">
        <id>Q14957</id>
    </interactant>
    <interactant intactId="EBI-12143817">
        <id>Q49A26-4</id>
        <label>GLYR1</label>
    </interactant>
    <organismsDiffer>false</organismsDiffer>
    <experiments>3</experiments>
</comment>
<comment type="interaction">
    <interactant intactId="EBI-8285963">
        <id>Q14957</id>
    </interactant>
    <interactant intactId="EBI-2514791">
        <id>Q96CS2</id>
        <label>HAUS1</label>
    </interactant>
    <organismsDiffer>false</organismsDiffer>
    <experiments>3</experiments>
</comment>
<comment type="interaction">
    <interactant intactId="EBI-8285963">
        <id>Q14957</id>
    </interactant>
    <interactant intactId="EBI-2558143">
        <id>Q9BT25</id>
        <label>HAUS8</label>
    </interactant>
    <organismsDiffer>false</organismsDiffer>
    <experiments>3</experiments>
</comment>
<comment type="interaction">
    <interactant intactId="EBI-8285963">
        <id>Q14957</id>
    </interactant>
    <interactant intactId="EBI-25854793">
        <id>Q5T447-2</id>
        <label>HECTD3</label>
    </interactant>
    <organismsDiffer>false</organismsDiffer>
    <experiments>3</experiments>
</comment>
<comment type="interaction">
    <interactant intactId="EBI-8285963">
        <id>Q14957</id>
    </interactant>
    <interactant intactId="EBI-352528">
        <id>P10809</id>
        <label>HSPD1</label>
    </interactant>
    <organismsDiffer>false</organismsDiffer>
    <experiments>3</experiments>
</comment>
<comment type="interaction">
    <interactant intactId="EBI-8285963">
        <id>Q14957</id>
    </interactant>
    <interactant intactId="EBI-12141931">
        <id>Q8NDH6-2</id>
        <label>ICA1L</label>
    </interactant>
    <organismsDiffer>false</organismsDiffer>
    <experiments>3</experiments>
</comment>
<comment type="interaction">
    <interactant intactId="EBI-8285963">
        <id>Q14957</id>
    </interactant>
    <interactant intactId="EBI-3862125">
        <id>Q9NZH6</id>
        <label>IL37</label>
    </interactant>
    <organismsDiffer>false</organismsDiffer>
    <experiments>3</experiments>
</comment>
<comment type="interaction">
    <interactant intactId="EBI-8285963">
        <id>Q14957</id>
    </interactant>
    <interactant intactId="EBI-9089060">
        <id>Q7Z7F0-4</id>
        <label>KHDC4</label>
    </interactant>
    <organismsDiffer>false</organismsDiffer>
    <experiments>3</experiments>
</comment>
<comment type="interaction">
    <interactant intactId="EBI-8285963">
        <id>Q14957</id>
    </interactant>
    <interactant intactId="EBI-713382">
        <id>O43504</id>
        <label>LAMTOR5</label>
    </interactant>
    <organismsDiffer>false</organismsDiffer>
    <experiments>3</experiments>
</comment>
<comment type="interaction">
    <interactant intactId="EBI-8285963">
        <id>Q14957</id>
    </interactant>
    <interactant intactId="EBI-9088686">
        <id>Q14847-2</id>
        <label>LASP1</label>
    </interactant>
    <organismsDiffer>false</organismsDiffer>
    <experiments>3</experiments>
</comment>
<comment type="interaction">
    <interactant intactId="EBI-8285963">
        <id>Q14957</id>
    </interactant>
    <interactant intactId="EBI-25835523">
        <id>Q9H2C1</id>
        <label>LHX5</label>
    </interactant>
    <organismsDiffer>false</organismsDiffer>
    <experiments>3</experiments>
</comment>
<comment type="interaction">
    <interactant intactId="EBI-8285963">
        <id>Q14957</id>
    </interactant>
    <interactant intactId="EBI-8474075">
        <id>Q68G74</id>
        <label>LHX8</label>
    </interactant>
    <organismsDiffer>false</organismsDiffer>
    <experiments>3</experiments>
</comment>
<comment type="interaction">
    <interactant intactId="EBI-8285963">
        <id>Q14957</id>
    </interactant>
    <interactant intactId="EBI-10264791">
        <id>Q8N0U6</id>
        <label>LINC00518</label>
    </interactant>
    <organismsDiffer>false</organismsDiffer>
    <experiments>3</experiments>
</comment>
<comment type="interaction">
    <interactant intactId="EBI-8285963">
        <id>Q14957</id>
    </interactant>
    <interactant intactId="EBI-2510853">
        <id>Q1L5Z9</id>
        <label>LONRF2</label>
    </interactant>
    <organismsDiffer>false</organismsDiffer>
    <experiments>3</experiments>
</comment>
<comment type="interaction">
    <interactant intactId="EBI-8285963">
        <id>Q14957</id>
    </interactant>
    <interactant intactId="EBI-749562">
        <id>Q96JB6</id>
        <label>LOXL4</label>
    </interactant>
    <organismsDiffer>false</organismsDiffer>
    <experiments>3</experiments>
</comment>
<comment type="interaction">
    <interactant intactId="EBI-8285963">
        <id>Q14957</id>
    </interactant>
    <interactant intactId="EBI-741355">
        <id>Q96LR2</id>
        <label>LURAP1</label>
    </interactant>
    <organismsDiffer>false</organismsDiffer>
    <experiments>3</experiments>
</comment>
<comment type="interaction">
    <interactant intactId="EBI-8285963">
        <id>Q14957</id>
    </interactant>
    <interactant intactId="EBI-25835557">
        <id>A0A0A0MR05</id>
        <label>MLST8</label>
    </interactant>
    <organismsDiffer>false</organismsDiffer>
    <experiments>3</experiments>
</comment>
<comment type="interaction">
    <interactant intactId="EBI-8285963">
        <id>Q14957</id>
    </interactant>
    <interactant intactId="EBI-25835707">
        <id>Q6IN84-2</id>
        <label>MRM1</label>
    </interactant>
    <organismsDiffer>false</organismsDiffer>
    <experiments>3</experiments>
</comment>
<comment type="interaction">
    <interactant intactId="EBI-8285963">
        <id>Q14957</id>
    </interactant>
    <interactant intactId="EBI-8466227">
        <id>Q96H12</id>
        <label>MSANTD3</label>
    </interactant>
    <organismsDiffer>false</organismsDiffer>
    <experiments>3</experiments>
</comment>
<comment type="interaction">
    <interactant intactId="EBI-8285963">
        <id>Q14957</id>
    </interactant>
    <interactant intactId="EBI-746712">
        <id>Q9NPC6</id>
        <label>MYOZ2</label>
    </interactant>
    <organismsDiffer>false</organismsDiffer>
    <experiments>3</experiments>
</comment>
<comment type="interaction">
    <interactant intactId="EBI-8285963">
        <id>Q14957</id>
    </interactant>
    <interactant intactId="EBI-12135485">
        <id>P41271-2</id>
        <label>NBL1</label>
    </interactant>
    <organismsDiffer>false</organismsDiffer>
    <experiments>3</experiments>
</comment>
<comment type="interaction">
    <interactant intactId="EBI-8285963">
        <id>Q14957</id>
    </interactant>
    <interactant intactId="EBI-3932727">
        <id>Q99743</id>
        <label>NPAS2</label>
    </interactant>
    <organismsDiffer>false</organismsDiffer>
    <experiments>3</experiments>
</comment>
<comment type="interaction">
    <interactant intactId="EBI-8285963">
        <id>Q14957</id>
    </interactant>
    <interactant intactId="EBI-2802743">
        <id>Q6PHZ7</id>
        <label>NR2C2</label>
    </interactant>
    <organismsDiffer>false</organismsDiffer>
    <experiments>3</experiments>
</comment>
<comment type="interaction">
    <interactant intactId="EBI-8285963">
        <id>Q14957</id>
    </interactant>
    <interactant intactId="EBI-9090919">
        <id>Q5BJF6-2</id>
        <label>ODF2</label>
    </interactant>
    <organismsDiffer>false</organismsDiffer>
    <experiments>3</experiments>
</comment>
<comment type="interaction">
    <interactant intactId="EBI-8285963">
        <id>Q14957</id>
    </interactant>
    <interactant intactId="EBI-536879">
        <id>O43482</id>
        <label>OIP5</label>
    </interactant>
    <organismsDiffer>false</organismsDiffer>
    <experiments>3</experiments>
</comment>
<comment type="interaction">
    <interactant intactId="EBI-8285963">
        <id>Q14957</id>
    </interactant>
    <interactant intactId="EBI-25830200">
        <id>Q6GQQ9-2</id>
        <label>OTUD7B</label>
    </interactant>
    <organismsDiffer>false</organismsDiffer>
    <experiments>3</experiments>
</comment>
<comment type="interaction">
    <interactant intactId="EBI-8285963">
        <id>Q14957</id>
    </interactant>
    <interactant intactId="EBI-17242559">
        <id>Q495U3</id>
        <label>PANX2</label>
    </interactant>
    <organismsDiffer>false</organismsDiffer>
    <experiments>3</experiments>
</comment>
<comment type="interaction">
    <interactant intactId="EBI-8285963">
        <id>Q14957</id>
    </interactant>
    <interactant intactId="EBI-17159452">
        <id>Q9NR21-5</id>
        <label>PARP11</label>
    </interactant>
    <organismsDiffer>false</organismsDiffer>
    <experiments>3</experiments>
</comment>
<comment type="interaction">
    <interactant intactId="EBI-8285963">
        <id>Q14957</id>
    </interactant>
    <interactant intactId="EBI-2557276">
        <id>O15534</id>
        <label>PER1</label>
    </interactant>
    <organismsDiffer>false</organismsDiffer>
    <experiments>3</experiments>
</comment>
<comment type="interaction">
    <interactant intactId="EBI-8285963">
        <id>Q14957</id>
    </interactant>
    <interactant intactId="EBI-12891828">
        <id>Q6ZR37</id>
        <label>PLEKHG7</label>
    </interactant>
    <organismsDiffer>false</organismsDiffer>
    <experiments>3</experiments>
</comment>
<comment type="interaction">
    <interactant intactId="EBI-8285963">
        <id>Q14957</id>
    </interactant>
    <interactant intactId="EBI-26412802">
        <id>Q5SXH7-1</id>
        <label>PLEKHS1</label>
    </interactant>
    <organismsDiffer>false</organismsDiffer>
    <experiments>3</experiments>
</comment>
<comment type="interaction">
    <interactant intactId="EBI-8285963">
        <id>Q14957</id>
    </interactant>
    <interactant intactId="EBI-395189">
        <id>P19388</id>
        <label>POLR2E</label>
    </interactant>
    <organismsDiffer>false</organismsDiffer>
    <experiments>3</experiments>
</comment>
<comment type="interaction">
    <interactant intactId="EBI-8285963">
        <id>Q14957</id>
    </interactant>
    <interactant intactId="EBI-78615">
        <id>Q07869</id>
        <label>PPARA</label>
    </interactant>
    <organismsDiffer>false</organismsDiffer>
    <experiments>3</experiments>
</comment>
<comment type="interaction">
    <interactant intactId="EBI-8285963">
        <id>Q14957</id>
    </interactant>
    <interactant intactId="EBI-10700351">
        <id>O60237-2</id>
        <label>PPP1R12B</label>
    </interactant>
    <organismsDiffer>false</organismsDiffer>
    <experiments>3</experiments>
</comment>
<comment type="interaction">
    <interactant intactId="EBI-8285963">
        <id>Q14957</id>
    </interactant>
    <interactant intactId="EBI-25835994">
        <id>Q6ZMI0-5</id>
        <label>PPP1R21</label>
    </interactant>
    <organismsDiffer>false</organismsDiffer>
    <experiments>3</experiments>
</comment>
<comment type="interaction">
    <interactant intactId="EBI-8285963">
        <id>Q14957</id>
    </interactant>
    <interactant intactId="EBI-1053424">
        <id>O43741</id>
        <label>PRKAB2</label>
    </interactant>
    <organismsDiffer>false</organismsDiffer>
    <experiments>3</experiments>
</comment>
<comment type="interaction">
    <interactant intactId="EBI-8285963">
        <id>Q14957</id>
    </interactant>
    <interactant intactId="EBI-357669">
        <id>P62333</id>
        <label>PSMC6</label>
    </interactant>
    <organismsDiffer>false</organismsDiffer>
    <experiments>3</experiments>
</comment>
<comment type="interaction">
    <interactant intactId="EBI-8285963">
        <id>Q14957</id>
    </interactant>
    <interactant intactId="EBI-712149">
        <id>Q06323</id>
        <label>PSME1</label>
    </interactant>
    <organismsDiffer>false</organismsDiffer>
    <experiments>3</experiments>
</comment>
<comment type="interaction">
    <interactant intactId="EBI-8285963">
        <id>Q14957</id>
    </interactant>
    <interactant intactId="EBI-10194874">
        <id>P06454-2</id>
        <label>PTMA</label>
    </interactant>
    <organismsDiffer>false</organismsDiffer>
    <experiments>3</experiments>
</comment>
<comment type="interaction">
    <interactant intactId="EBI-8285963">
        <id>Q14957</id>
    </interactant>
    <interactant intactId="EBI-25835884">
        <id>Q8WUD1-2</id>
        <label>RAB2B</label>
    </interactant>
    <organismsDiffer>false</organismsDiffer>
    <experiments>3</experiments>
</comment>
<comment type="interaction">
    <interactant intactId="EBI-8285963">
        <id>Q14957</id>
    </interactant>
    <interactant intactId="EBI-25834767">
        <id>P47804-3</id>
        <label>RGR</label>
    </interactant>
    <organismsDiffer>false</organismsDiffer>
    <experiments>3</experiments>
</comment>
<comment type="interaction">
    <interactant intactId="EBI-8285963">
        <id>Q14957</id>
    </interactant>
    <interactant intactId="EBI-1055287">
        <id>Q15382</id>
        <label>RHEB</label>
    </interactant>
    <organismsDiffer>false</organismsDiffer>
    <experiments>3</experiments>
</comment>
<comment type="interaction">
    <interactant intactId="EBI-8285963">
        <id>Q14957</id>
    </interactant>
    <interactant intactId="EBI-749039">
        <id>Q8WVD3</id>
        <label>RNF138</label>
    </interactant>
    <organismsDiffer>false</organismsDiffer>
    <experiments>3</experiments>
</comment>
<comment type="interaction">
    <interactant intactId="EBI-8285963">
        <id>Q14957</id>
    </interactant>
    <interactant intactId="EBI-751555">
        <id>Q9H0X6</id>
        <label>RNF208</label>
    </interactant>
    <organismsDiffer>false</organismsDiffer>
    <experiments>3</experiments>
</comment>
<comment type="interaction">
    <interactant intactId="EBI-8285963">
        <id>Q14957</id>
    </interactant>
    <interactant intactId="EBI-354303">
        <id>P62701</id>
        <label>RPS4X</label>
    </interactant>
    <organismsDiffer>false</organismsDiffer>
    <experiments>3</experiments>
</comment>
<comment type="interaction">
    <interactant intactId="EBI-8285963">
        <id>Q14957</id>
    </interactant>
    <interactant intactId="EBI-9089805">
        <id>Q9NTN9-3</id>
        <label>SEMA4G</label>
    </interactant>
    <organismsDiffer>false</organismsDiffer>
    <experiments>3</experiments>
</comment>
<comment type="interaction">
    <interactant intactId="EBI-8285963">
        <id>Q14957</id>
    </interactant>
    <interactant intactId="EBI-9092164">
        <id>O60902-3</id>
        <label>SHOX2</label>
    </interactant>
    <organismsDiffer>false</organismsDiffer>
    <experiments>3</experiments>
</comment>
<comment type="interaction">
    <interactant intactId="EBI-8285963">
        <id>Q14957</id>
    </interactant>
    <interactant intactId="EBI-632715">
        <id>Q13573</id>
        <label>SNW1</label>
    </interactant>
    <organismsDiffer>false</organismsDiffer>
    <experiments>3</experiments>
</comment>
<comment type="interaction">
    <interactant intactId="EBI-8285963">
        <id>Q14957</id>
    </interactant>
    <interactant intactId="EBI-3923692">
        <id>Q496A3</id>
        <label>SPATS1</label>
    </interactant>
    <organismsDiffer>false</organismsDiffer>
    <experiments>3</experiments>
</comment>
<comment type="interaction">
    <interactant intactId="EBI-8285963">
        <id>Q14957</id>
    </interactant>
    <interactant intactId="EBI-12408727">
        <id>Q5W111-2</id>
        <label>SPRYD7</label>
    </interactant>
    <organismsDiffer>false</organismsDiffer>
    <experiments>3</experiments>
</comment>
<comment type="interaction">
    <interactant intactId="EBI-8285963">
        <id>Q14957</id>
    </interactant>
    <interactant intactId="EBI-448878">
        <id>Q13586</id>
        <label>STIM1</label>
    </interactant>
    <organismsDiffer>false</organismsDiffer>
    <experiments>3</experiments>
</comment>
<comment type="interaction">
    <interactant intactId="EBI-8285963">
        <id>Q14957</id>
    </interactant>
    <interactant intactId="EBI-954089">
        <id>O15273</id>
        <label>TCAP</label>
    </interactant>
    <organismsDiffer>false</organismsDiffer>
    <experiments>3</experiments>
</comment>
<comment type="interaction">
    <interactant intactId="EBI-8285963">
        <id>Q14957</id>
    </interactant>
    <interactant intactId="EBI-2562799">
        <id>Q86WV5</id>
        <label>TEN1</label>
    </interactant>
    <organismsDiffer>false</organismsDiffer>
    <experiments>3</experiments>
</comment>
<comment type="interaction">
    <interactant intactId="EBI-8285963">
        <id>Q14957</id>
    </interactant>
    <interactant intactId="EBI-711018">
        <id>P54274-2</id>
        <label>TERF1</label>
    </interactant>
    <organismsDiffer>false</organismsDiffer>
    <experiments>3</experiments>
</comment>
<comment type="interaction">
    <interactant intactId="EBI-8285963">
        <id>Q14957</id>
    </interactant>
    <interactant intactId="EBI-12090309">
        <id>Q9BXU0</id>
        <label>TEX12</label>
    </interactant>
    <organismsDiffer>false</organismsDiffer>
    <experiments>3</experiments>
</comment>
<comment type="interaction">
    <interactant intactId="EBI-8285963">
        <id>Q14957</id>
    </interactant>
    <interactant intactId="EBI-12833746">
        <id>Q5T0J7-2</id>
        <label>TEX35</label>
    </interactant>
    <organismsDiffer>false</organismsDiffer>
    <experiments>3</experiments>
</comment>
<comment type="interaction">
    <interactant intactId="EBI-8285963">
        <id>Q14957</id>
    </interactant>
    <interactant intactId="EBI-17438286">
        <id>Q8WTV1</id>
        <label>THAP3</label>
    </interactant>
    <organismsDiffer>false</organismsDiffer>
    <experiments>3</experiments>
</comment>
<comment type="interaction">
    <interactant intactId="EBI-8285963">
        <id>Q14957</id>
    </interactant>
    <interactant intactId="EBI-2372529">
        <id>O60830</id>
        <label>TIMM17B</label>
    </interactant>
    <organismsDiffer>false</organismsDiffer>
    <experiments>3</experiments>
</comment>
<comment type="interaction">
    <interactant intactId="EBI-8285963">
        <id>Q14957</id>
    </interactant>
    <interactant intactId="EBI-25830583">
        <id>Q8N0U2</id>
        <label>TMEM61</label>
    </interactant>
    <organismsDiffer>false</organismsDiffer>
    <experiments>3</experiments>
</comment>
<comment type="interaction">
    <interactant intactId="EBI-8285963">
        <id>Q14957</id>
    </interactant>
    <interactant intactId="EBI-9089156">
        <id>Q8IUR5-4</id>
        <label>TMTC1</label>
    </interactant>
    <organismsDiffer>false</organismsDiffer>
    <experiments>3</experiments>
</comment>
<comment type="interaction">
    <interactant intactId="EBI-8285963">
        <id>Q14957</id>
    </interactant>
    <interactant intactId="EBI-740098">
        <id>P36406</id>
        <label>TRIM23</label>
    </interactant>
    <organismsDiffer>false</organismsDiffer>
    <experiments>3</experiments>
</comment>
<comment type="interaction">
    <interactant intactId="EBI-8285963">
        <id>Q14957</id>
    </interactant>
    <interactant intactId="EBI-17716262">
        <id>Q9UPQ4-2</id>
        <label>TRIM35</label>
    </interactant>
    <organismsDiffer>false</organismsDiffer>
    <experiments>3</experiments>
</comment>
<comment type="interaction">
    <interactant intactId="EBI-8285963">
        <id>Q14957</id>
    </interactant>
    <interactant intactId="EBI-8656864">
        <id>Q6PF05</id>
        <label>TTC23L</label>
    </interactant>
    <organismsDiffer>false</organismsDiffer>
    <experiments>3</experiments>
</comment>
<comment type="interaction">
    <interactant intactId="EBI-8285963">
        <id>Q14957</id>
    </interactant>
    <interactant intactId="EBI-2339348">
        <id>P49459</id>
        <label>UBE2A</label>
    </interactant>
    <organismsDiffer>false</organismsDiffer>
    <experiments>3</experiments>
</comment>
<comment type="interaction">
    <interactant intactId="EBI-8285963">
        <id>Q14957</id>
    </interactant>
    <interactant intactId="EBI-1050671">
        <id>Q13404</id>
        <label>UBE2V1</label>
    </interactant>
    <organismsDiffer>false</organismsDiffer>
    <experiments>3</experiments>
</comment>
<comment type="interaction">
    <interactant intactId="EBI-8285963">
        <id>Q14957</id>
    </interactant>
    <interactant intactId="EBI-25835297">
        <id>Q9P1Q0-4</id>
        <label>VPS54</label>
    </interactant>
    <organismsDiffer>false</organismsDiffer>
    <experiments>3</experiments>
</comment>
<comment type="interaction">
    <interactant intactId="EBI-8285963">
        <id>Q14957</id>
    </interactant>
    <interactant intactId="EBI-10316321">
        <id>Q9NX94</id>
        <label>WBP1L</label>
    </interactant>
    <organismsDiffer>false</organismsDiffer>
    <experiments>3</experiments>
</comment>
<comment type="interaction">
    <interactant intactId="EBI-8285963">
        <id>Q14957</id>
    </interactant>
    <interactant intactId="EBI-10176632">
        <id>O43829</id>
        <label>ZBTB14</label>
    </interactant>
    <organismsDiffer>false</organismsDiffer>
    <experiments>3</experiments>
</comment>
<comment type="interaction">
    <interactant intactId="EBI-8285963">
        <id>Q14957</id>
    </interactant>
    <interactant intactId="EBI-14104088">
        <id>Q53FD0-2</id>
        <label>ZC2HC1C</label>
    </interactant>
    <organismsDiffer>false</organismsDiffer>
    <experiments>3</experiments>
</comment>
<comment type="interaction">
    <interactant intactId="EBI-8285963">
        <id>Q14957</id>
    </interactant>
    <interactant intactId="EBI-746345">
        <id>Q9NP64</id>
        <label>ZCCHC17</label>
    </interactant>
    <organismsDiffer>false</organismsDiffer>
    <experiments>3</experiments>
</comment>
<comment type="interaction">
    <interactant intactId="EBI-8285963">
        <id>Q14957</id>
    </interactant>
    <interactant intactId="EBI-25835852">
        <id>Q96JL9-2</id>
        <label>ZNF333</label>
    </interactant>
    <organismsDiffer>false</organismsDiffer>
    <experiments>3</experiments>
</comment>
<comment type="interaction">
    <interactant intactId="EBI-8285963">
        <id>Q14957</id>
    </interactant>
    <interactant intactId="EBI-18036029">
        <id>Q3KNS6-3</id>
        <label>ZNF829</label>
    </interactant>
    <organismsDiffer>false</organismsDiffer>
    <experiments>3</experiments>
</comment>
<comment type="interaction">
    <interactant intactId="EBI-8285963">
        <id>Q14957</id>
    </interactant>
    <interactant intactId="EBI-25831617">
        <id>B7Z3E8</id>
    </interactant>
    <organismsDiffer>false</organismsDiffer>
    <experiments>3</experiments>
</comment>
<comment type="interaction">
    <interactant intactId="EBI-8285963">
        <id>Q14957</id>
    </interactant>
    <interactant intactId="EBI-349596">
        <id>Q62936</id>
        <label>Dlg3</label>
    </interactant>
    <organismsDiffer>true</organismsDiffer>
    <experiments>6</experiments>
</comment>
<comment type="interaction">
    <interactant intactId="EBI-8285963">
        <id>Q14957</id>
    </interactant>
    <interactant intactId="EBI-375655">
        <id>P31016</id>
        <label>Dlg4</label>
    </interactant>
    <organismsDiffer>true</organismsDiffer>
    <experiments>2</experiments>
</comment>
<comment type="subcellular location">
    <subcellularLocation>
        <location evidence="11">Cell membrane</location>
        <topology evidence="15">Multi-pass membrane protein</topology>
    </subcellularLocation>
    <subcellularLocation>
        <location>Postsynaptic cell membrane</location>
        <topology>Multi-pass membrane protein</topology>
    </subcellularLocation>
</comment>
<comment type="tissue specificity">
    <text evidence="13">Mainly expressed in brain with predominant expression is in the cerebellum, also present in the hippocampus, amygdala, caudate nucleus, corpus callosum, subthalamic nuclei and thalamus. Detected in the heart, skeletal muscle and pancreas.</text>
</comment>
<comment type="domain">
    <text evidence="4">A hydrophobic region that gives rise to the prediction of a transmembrane span does not cross the membrane, but is part of a discontinuously helical region that dips into the membrane and is probably part of the pore and of the selectivity filter.</text>
</comment>
<comment type="similarity">
    <text evidence="15">Belongs to the glutamate-gated ion channel (TC 1.A.10.1) family. NR2C/GRIN2C subfamily.</text>
</comment>